<name>DAPB_NITEU</name>
<comment type="function">
    <text evidence="1">Catalyzes the conversion of 4-hydroxy-tetrahydrodipicolinate (HTPA) to tetrahydrodipicolinate.</text>
</comment>
<comment type="catalytic activity">
    <reaction evidence="1">
        <text>(S)-2,3,4,5-tetrahydrodipicolinate + NAD(+) + H2O = (2S,4S)-4-hydroxy-2,3,4,5-tetrahydrodipicolinate + NADH + H(+)</text>
        <dbReference type="Rhea" id="RHEA:35323"/>
        <dbReference type="ChEBI" id="CHEBI:15377"/>
        <dbReference type="ChEBI" id="CHEBI:15378"/>
        <dbReference type="ChEBI" id="CHEBI:16845"/>
        <dbReference type="ChEBI" id="CHEBI:57540"/>
        <dbReference type="ChEBI" id="CHEBI:57945"/>
        <dbReference type="ChEBI" id="CHEBI:67139"/>
        <dbReference type="EC" id="1.17.1.8"/>
    </reaction>
</comment>
<comment type="catalytic activity">
    <reaction evidence="1">
        <text>(S)-2,3,4,5-tetrahydrodipicolinate + NADP(+) + H2O = (2S,4S)-4-hydroxy-2,3,4,5-tetrahydrodipicolinate + NADPH + H(+)</text>
        <dbReference type="Rhea" id="RHEA:35331"/>
        <dbReference type="ChEBI" id="CHEBI:15377"/>
        <dbReference type="ChEBI" id="CHEBI:15378"/>
        <dbReference type="ChEBI" id="CHEBI:16845"/>
        <dbReference type="ChEBI" id="CHEBI:57783"/>
        <dbReference type="ChEBI" id="CHEBI:58349"/>
        <dbReference type="ChEBI" id="CHEBI:67139"/>
        <dbReference type="EC" id="1.17.1.8"/>
    </reaction>
</comment>
<comment type="pathway">
    <text evidence="1">Amino-acid biosynthesis; L-lysine biosynthesis via DAP pathway; (S)-tetrahydrodipicolinate from L-aspartate: step 4/4.</text>
</comment>
<comment type="subcellular location">
    <subcellularLocation>
        <location evidence="1">Cytoplasm</location>
    </subcellularLocation>
</comment>
<comment type="similarity">
    <text evidence="1">Belongs to the DapB family.</text>
</comment>
<comment type="caution">
    <text evidence="2">Was originally thought to be a dihydrodipicolinate reductase (DHDPR), catalyzing the conversion of dihydrodipicolinate to tetrahydrodipicolinate. However, it was shown in E.coli that the substrate of the enzymatic reaction is not dihydrodipicolinate (DHDP) but in fact (2S,4S)-4-hydroxy-2,3,4,5-tetrahydrodipicolinic acid (HTPA), the product released by the DapA-catalyzed reaction.</text>
</comment>
<feature type="chain" id="PRO_0000141461" description="4-hydroxy-tetrahydrodipicolinate reductase">
    <location>
        <begin position="1"/>
        <end position="268"/>
    </location>
</feature>
<feature type="active site" description="Proton donor/acceptor" evidence="1">
    <location>
        <position position="156"/>
    </location>
</feature>
<feature type="active site" description="Proton donor" evidence="1">
    <location>
        <position position="160"/>
    </location>
</feature>
<feature type="binding site" evidence="1">
    <location>
        <begin position="10"/>
        <end position="15"/>
    </location>
    <ligand>
        <name>NAD(+)</name>
        <dbReference type="ChEBI" id="CHEBI:57540"/>
    </ligand>
</feature>
<feature type="binding site" evidence="1">
    <location>
        <position position="36"/>
    </location>
    <ligand>
        <name>NAD(+)</name>
        <dbReference type="ChEBI" id="CHEBI:57540"/>
    </ligand>
</feature>
<feature type="binding site" evidence="1">
    <location>
        <begin position="99"/>
        <end position="101"/>
    </location>
    <ligand>
        <name>NAD(+)</name>
        <dbReference type="ChEBI" id="CHEBI:57540"/>
    </ligand>
</feature>
<feature type="binding site" evidence="1">
    <location>
        <begin position="123"/>
        <end position="126"/>
    </location>
    <ligand>
        <name>NAD(+)</name>
        <dbReference type="ChEBI" id="CHEBI:57540"/>
    </ligand>
</feature>
<feature type="binding site" evidence="1">
    <location>
        <position position="157"/>
    </location>
    <ligand>
        <name>(S)-2,3,4,5-tetrahydrodipicolinate</name>
        <dbReference type="ChEBI" id="CHEBI:16845"/>
    </ligand>
</feature>
<feature type="binding site" evidence="1">
    <location>
        <begin position="166"/>
        <end position="167"/>
    </location>
    <ligand>
        <name>(S)-2,3,4,5-tetrahydrodipicolinate</name>
        <dbReference type="ChEBI" id="CHEBI:16845"/>
    </ligand>
</feature>
<evidence type="ECO:0000255" key="1">
    <source>
        <dbReference type="HAMAP-Rule" id="MF_00102"/>
    </source>
</evidence>
<evidence type="ECO:0000305" key="2"/>
<accession>Q82WP9</accession>
<proteinExistence type="inferred from homology"/>
<gene>
    <name evidence="1" type="primary">dapB</name>
    <name type="ordered locus">NE0614</name>
</gene>
<protein>
    <recommendedName>
        <fullName evidence="1">4-hydroxy-tetrahydrodipicolinate reductase</fullName>
        <shortName evidence="1">HTPA reductase</shortName>
        <ecNumber evidence="1">1.17.1.8</ecNumber>
    </recommendedName>
</protein>
<organism>
    <name type="scientific">Nitrosomonas europaea (strain ATCC 19718 / CIP 103999 / KCTC 2705 / NBRC 14298)</name>
    <dbReference type="NCBI Taxonomy" id="228410"/>
    <lineage>
        <taxon>Bacteria</taxon>
        <taxon>Pseudomonadati</taxon>
        <taxon>Pseudomonadota</taxon>
        <taxon>Betaproteobacteria</taxon>
        <taxon>Nitrosomonadales</taxon>
        <taxon>Nitrosomonadaceae</taxon>
        <taxon>Nitrosomonas</taxon>
    </lineage>
</organism>
<reference key="1">
    <citation type="journal article" date="2003" name="J. Bacteriol.">
        <title>Complete genome sequence of the ammonia-oxidizing bacterium and obligate chemolithoautotroph Nitrosomonas europaea.</title>
        <authorList>
            <person name="Chain P."/>
            <person name="Lamerdin J.E."/>
            <person name="Larimer F.W."/>
            <person name="Regala W."/>
            <person name="Lao V."/>
            <person name="Land M.L."/>
            <person name="Hauser L."/>
            <person name="Hooper A.B."/>
            <person name="Klotz M.G."/>
            <person name="Norton J."/>
            <person name="Sayavedra-Soto L.A."/>
            <person name="Arciero D.M."/>
            <person name="Hommes N.G."/>
            <person name="Whittaker M.M."/>
            <person name="Arp D.J."/>
        </authorList>
    </citation>
    <scope>NUCLEOTIDE SEQUENCE [LARGE SCALE GENOMIC DNA]</scope>
    <source>
        <strain>ATCC 19718 / CIP 103999 / KCTC 2705 / NBRC 14298</strain>
    </source>
</reference>
<keyword id="KW-0028">Amino-acid biosynthesis</keyword>
<keyword id="KW-0963">Cytoplasm</keyword>
<keyword id="KW-0220">Diaminopimelate biosynthesis</keyword>
<keyword id="KW-0457">Lysine biosynthesis</keyword>
<keyword id="KW-0520">NAD</keyword>
<keyword id="KW-0521">NADP</keyword>
<keyword id="KW-0560">Oxidoreductase</keyword>
<keyword id="KW-1185">Reference proteome</keyword>
<dbReference type="EC" id="1.17.1.8" evidence="1"/>
<dbReference type="EMBL" id="AL954747">
    <property type="protein sequence ID" value="CAD84525.1"/>
    <property type="molecule type" value="Genomic_DNA"/>
</dbReference>
<dbReference type="RefSeq" id="WP_011111240.1">
    <property type="nucleotide sequence ID" value="NC_004757.1"/>
</dbReference>
<dbReference type="SMR" id="Q82WP9"/>
<dbReference type="STRING" id="228410.NE0614"/>
<dbReference type="GeneID" id="87103813"/>
<dbReference type="KEGG" id="neu:NE0614"/>
<dbReference type="eggNOG" id="COG0289">
    <property type="taxonomic scope" value="Bacteria"/>
</dbReference>
<dbReference type="HOGENOM" id="CLU_047479_2_1_4"/>
<dbReference type="OrthoDB" id="9790352at2"/>
<dbReference type="PhylomeDB" id="Q82WP9"/>
<dbReference type="UniPathway" id="UPA00034">
    <property type="reaction ID" value="UER00018"/>
</dbReference>
<dbReference type="Proteomes" id="UP000001416">
    <property type="component" value="Chromosome"/>
</dbReference>
<dbReference type="GO" id="GO:0005829">
    <property type="term" value="C:cytosol"/>
    <property type="evidence" value="ECO:0007669"/>
    <property type="project" value="TreeGrafter"/>
</dbReference>
<dbReference type="GO" id="GO:0008839">
    <property type="term" value="F:4-hydroxy-tetrahydrodipicolinate reductase"/>
    <property type="evidence" value="ECO:0007669"/>
    <property type="project" value="UniProtKB-EC"/>
</dbReference>
<dbReference type="GO" id="GO:0051287">
    <property type="term" value="F:NAD binding"/>
    <property type="evidence" value="ECO:0007669"/>
    <property type="project" value="UniProtKB-UniRule"/>
</dbReference>
<dbReference type="GO" id="GO:0050661">
    <property type="term" value="F:NADP binding"/>
    <property type="evidence" value="ECO:0007669"/>
    <property type="project" value="UniProtKB-UniRule"/>
</dbReference>
<dbReference type="GO" id="GO:0016726">
    <property type="term" value="F:oxidoreductase activity, acting on CH or CH2 groups, NAD or NADP as acceptor"/>
    <property type="evidence" value="ECO:0007669"/>
    <property type="project" value="UniProtKB-UniRule"/>
</dbReference>
<dbReference type="GO" id="GO:0019877">
    <property type="term" value="P:diaminopimelate biosynthetic process"/>
    <property type="evidence" value="ECO:0007669"/>
    <property type="project" value="UniProtKB-UniRule"/>
</dbReference>
<dbReference type="GO" id="GO:0009089">
    <property type="term" value="P:lysine biosynthetic process via diaminopimelate"/>
    <property type="evidence" value="ECO:0007669"/>
    <property type="project" value="UniProtKB-UniRule"/>
</dbReference>
<dbReference type="CDD" id="cd02274">
    <property type="entry name" value="DHDPR_N"/>
    <property type="match status" value="1"/>
</dbReference>
<dbReference type="FunFam" id="3.30.360.10:FF:000004">
    <property type="entry name" value="4-hydroxy-tetrahydrodipicolinate reductase"/>
    <property type="match status" value="1"/>
</dbReference>
<dbReference type="Gene3D" id="3.30.360.10">
    <property type="entry name" value="Dihydrodipicolinate Reductase, domain 2"/>
    <property type="match status" value="1"/>
</dbReference>
<dbReference type="Gene3D" id="3.40.50.720">
    <property type="entry name" value="NAD(P)-binding Rossmann-like Domain"/>
    <property type="match status" value="1"/>
</dbReference>
<dbReference type="HAMAP" id="MF_00102">
    <property type="entry name" value="DapB"/>
    <property type="match status" value="1"/>
</dbReference>
<dbReference type="InterPro" id="IPR022663">
    <property type="entry name" value="DapB_C"/>
</dbReference>
<dbReference type="InterPro" id="IPR000846">
    <property type="entry name" value="DapB_N"/>
</dbReference>
<dbReference type="InterPro" id="IPR022664">
    <property type="entry name" value="DapB_N_CS"/>
</dbReference>
<dbReference type="InterPro" id="IPR023940">
    <property type="entry name" value="DHDPR_bac"/>
</dbReference>
<dbReference type="InterPro" id="IPR036291">
    <property type="entry name" value="NAD(P)-bd_dom_sf"/>
</dbReference>
<dbReference type="NCBIfam" id="TIGR00036">
    <property type="entry name" value="dapB"/>
    <property type="match status" value="1"/>
</dbReference>
<dbReference type="PANTHER" id="PTHR20836:SF0">
    <property type="entry name" value="4-HYDROXY-TETRAHYDRODIPICOLINATE REDUCTASE 1, CHLOROPLASTIC-RELATED"/>
    <property type="match status" value="1"/>
</dbReference>
<dbReference type="PANTHER" id="PTHR20836">
    <property type="entry name" value="DIHYDRODIPICOLINATE REDUCTASE"/>
    <property type="match status" value="1"/>
</dbReference>
<dbReference type="Pfam" id="PF05173">
    <property type="entry name" value="DapB_C"/>
    <property type="match status" value="1"/>
</dbReference>
<dbReference type="Pfam" id="PF01113">
    <property type="entry name" value="DapB_N"/>
    <property type="match status" value="1"/>
</dbReference>
<dbReference type="PIRSF" id="PIRSF000161">
    <property type="entry name" value="DHPR"/>
    <property type="match status" value="1"/>
</dbReference>
<dbReference type="SUPFAM" id="SSF55347">
    <property type="entry name" value="Glyceraldehyde-3-phosphate dehydrogenase-like, C-terminal domain"/>
    <property type="match status" value="1"/>
</dbReference>
<dbReference type="SUPFAM" id="SSF51735">
    <property type="entry name" value="NAD(P)-binding Rossmann-fold domains"/>
    <property type="match status" value="1"/>
</dbReference>
<dbReference type="PROSITE" id="PS01298">
    <property type="entry name" value="DAPB"/>
    <property type="match status" value="1"/>
</dbReference>
<sequence>MTPLNIAVAGSTGRMGRAIMETIAEADDLRLSAALEQPGNPYLSQDAGSLTGTPPGVAISSDYVSALAGSDILVDFTRPAGTLSHLATCRKLGVRMVIGTTGFSPEEKDIIRNAAQDIAIVLAPNMSVGVNLLFRLLEVAAKALPEGYDVEIIEAHHRHKVDAPSGTALRMGEVIAQAQSRDLEKVAIYGREGNTGERRADTIGFSTIRGGDIVGDHTALFAGIGERLEITHKASSRKTFAAGALHAARFLMTRKSGLFDMQDVLGLR</sequence>